<dbReference type="EC" id="2.5.1.-" evidence="2"/>
<dbReference type="EC" id="2.5.1.1" evidence="1"/>
<dbReference type="EC" id="2.5.1.29" evidence="1"/>
<dbReference type="EC" id="2.5.1.10" evidence="1"/>
<dbReference type="SMR" id="P9WEX3"/>
<dbReference type="UniPathway" id="UPA00213"/>
<dbReference type="GO" id="GO:0004337">
    <property type="term" value="F:(2E,6E)-farnesyl diphosphate synthase activity"/>
    <property type="evidence" value="ECO:0007669"/>
    <property type="project" value="UniProtKB-EC"/>
</dbReference>
<dbReference type="GO" id="GO:0004161">
    <property type="term" value="F:dimethylallyltranstransferase activity"/>
    <property type="evidence" value="ECO:0007669"/>
    <property type="project" value="UniProtKB-EC"/>
</dbReference>
<dbReference type="GO" id="GO:0004311">
    <property type="term" value="F:geranylgeranyl diphosphate synthase activity"/>
    <property type="evidence" value="ECO:0007669"/>
    <property type="project" value="UniProtKB-EC"/>
</dbReference>
<dbReference type="GO" id="GO:0046872">
    <property type="term" value="F:metal ion binding"/>
    <property type="evidence" value="ECO:0007669"/>
    <property type="project" value="UniProtKB-KW"/>
</dbReference>
<dbReference type="GO" id="GO:0046165">
    <property type="term" value="P:alcohol biosynthetic process"/>
    <property type="evidence" value="ECO:0007669"/>
    <property type="project" value="UniProtKB-ARBA"/>
</dbReference>
<dbReference type="GO" id="GO:0043386">
    <property type="term" value="P:mycotoxin biosynthetic process"/>
    <property type="evidence" value="ECO:0007669"/>
    <property type="project" value="UniProtKB-ARBA"/>
</dbReference>
<dbReference type="GO" id="GO:0016114">
    <property type="term" value="P:terpenoid biosynthetic process"/>
    <property type="evidence" value="ECO:0007669"/>
    <property type="project" value="UniProtKB-UniPathway"/>
</dbReference>
<dbReference type="CDD" id="cd00685">
    <property type="entry name" value="Trans_IPPS_HT"/>
    <property type="match status" value="1"/>
</dbReference>
<dbReference type="Gene3D" id="1.10.600.10">
    <property type="entry name" value="Farnesyl Diphosphate Synthase"/>
    <property type="match status" value="1"/>
</dbReference>
<dbReference type="InterPro" id="IPR008949">
    <property type="entry name" value="Isoprenoid_synthase_dom_sf"/>
</dbReference>
<dbReference type="InterPro" id="IPR000092">
    <property type="entry name" value="Polyprenyl_synt"/>
</dbReference>
<dbReference type="InterPro" id="IPR033749">
    <property type="entry name" value="Polyprenyl_synt_CS"/>
</dbReference>
<dbReference type="PANTHER" id="PTHR12001">
    <property type="entry name" value="GERANYLGERANYL PYROPHOSPHATE SYNTHASE"/>
    <property type="match status" value="1"/>
</dbReference>
<dbReference type="PANTHER" id="PTHR12001:SF70">
    <property type="entry name" value="PYROPHOSPHATE SYNTHETASE ATMG, PUTATIVE (AFU_ORTHOLOGUE AFUA_8G02400)-RELATED"/>
    <property type="match status" value="1"/>
</dbReference>
<dbReference type="Pfam" id="PF00348">
    <property type="entry name" value="polyprenyl_synt"/>
    <property type="match status" value="1"/>
</dbReference>
<dbReference type="SFLD" id="SFLDS00005">
    <property type="entry name" value="Isoprenoid_Synthase_Type_I"/>
    <property type="match status" value="1"/>
</dbReference>
<dbReference type="SFLD" id="SFLDG01017">
    <property type="entry name" value="Polyprenyl_Transferase_Like"/>
    <property type="match status" value="1"/>
</dbReference>
<dbReference type="SUPFAM" id="SSF48576">
    <property type="entry name" value="Terpenoid synthases"/>
    <property type="match status" value="1"/>
</dbReference>
<dbReference type="PROSITE" id="PS00723">
    <property type="entry name" value="POLYPRENYL_SYNTHASE_1"/>
    <property type="match status" value="1"/>
</dbReference>
<dbReference type="PROSITE" id="PS00444">
    <property type="entry name" value="POLYPRENYL_SYNTHASE_2"/>
    <property type="match status" value="1"/>
</dbReference>
<gene>
    <name evidence="3" type="primary">dpasD</name>
</gene>
<sequence>MTNSTLPPAQLHHLPASSIKSGAVNGAAADPVGTNEKFLQILRAPIDYLLTIPGKDVRGKMMNAFNQWLQIPEEKLDIIKEVIKLLHTASLLIDDIQDNSRLRRGLPVAHSIFGVAQTINTANYAYFLAQQELNKLDCAAAYEVFTEELLRLHQGQGMDIYWRDSSLCPTEEEYFEMVGNKTGGLFRLAVRLMQLASNKDCDFVPFVNVLGILFQIRDDYLNLQSDLYTKNKGFGEDLTEGKFSFPIIHSIRADPASITLTSILKQRTEDEDVKRYAISYIESTGSFEHCRRKIDELVGEARMCVKDMSPEDAKVADGIMAMVGLGAGGLSI</sequence>
<name>DPASD_APISA</name>
<comment type="function">
    <text evidence="2">Geranylgeranyl pyrophosphate synthase; part of the gene cluster that mediates the biosynthesis of the diterpenoid pyrones subglutinols A and B (PubMed:32286350). The first step of the pathway is the synthesis of the alpha-pyrone moiety by the polyketide synthase dpasA via condensation of one acetyl-CoA starter unit with 3 malonyl-CoA units and 2 methylations (PubMed:32286350). The alpha-pyrone is then combined with geranylgeranyl pyrophosphate (GGPP) formed by the GGPP synthase dpasD through the action of the prenyltransferase dpasC to yield a linear alpha-pyrone diterpenoid (PubMed:32286350). Subsequent steps in the diterpenoid pyrone biosynthetic pathway involve the decalin core formation, which is initiated by the epoxidation of the C10-C11 olefin by the FAD-dependent oxidoreductase dpasE, and is followed by a cyclization cascade catalyzed by the terpene cyclase dpasB (PubMed:32286350). The FAD-linked oxidoreductase dpasF is then involved in tetrahydrofuran (THF) ring formation at the C5 unit to complete the formation of subglutinols A and B (PubMed:32286350). DpasF also possesses an additional catalytic ability of multi-step oxidations to generate a new DDP analog with an enone system at the C5 named FDDP A (PubMed:32286350).</text>
</comment>
<comment type="catalytic activity">
    <reaction evidence="1">
        <text>isopentenyl diphosphate + dimethylallyl diphosphate = (2E)-geranyl diphosphate + diphosphate</text>
        <dbReference type="Rhea" id="RHEA:22408"/>
        <dbReference type="ChEBI" id="CHEBI:33019"/>
        <dbReference type="ChEBI" id="CHEBI:57623"/>
        <dbReference type="ChEBI" id="CHEBI:58057"/>
        <dbReference type="ChEBI" id="CHEBI:128769"/>
        <dbReference type="EC" id="2.5.1.1"/>
    </reaction>
</comment>
<comment type="catalytic activity">
    <reaction evidence="1">
        <text>isopentenyl diphosphate + (2E)-geranyl diphosphate = (2E,6E)-farnesyl diphosphate + diphosphate</text>
        <dbReference type="Rhea" id="RHEA:19361"/>
        <dbReference type="ChEBI" id="CHEBI:33019"/>
        <dbReference type="ChEBI" id="CHEBI:58057"/>
        <dbReference type="ChEBI" id="CHEBI:128769"/>
        <dbReference type="ChEBI" id="CHEBI:175763"/>
        <dbReference type="EC" id="2.5.1.10"/>
    </reaction>
</comment>
<comment type="catalytic activity">
    <reaction evidence="1">
        <text>isopentenyl diphosphate + (2E,6E)-farnesyl diphosphate = (2E,6E,10E)-geranylgeranyl diphosphate + diphosphate</text>
        <dbReference type="Rhea" id="RHEA:17653"/>
        <dbReference type="ChEBI" id="CHEBI:33019"/>
        <dbReference type="ChEBI" id="CHEBI:58756"/>
        <dbReference type="ChEBI" id="CHEBI:128769"/>
        <dbReference type="ChEBI" id="CHEBI:175763"/>
        <dbReference type="EC" id="2.5.1.29"/>
    </reaction>
</comment>
<comment type="cofactor">
    <cofactor evidence="1">
        <name>Mg(2+)</name>
        <dbReference type="ChEBI" id="CHEBI:18420"/>
    </cofactor>
    <text evidence="1">Binds 3 Mg(2+) ions per subunit.</text>
</comment>
<comment type="pathway">
    <text evidence="2">Secondary metabolite biosynthesis; terpenoid biosynthesis.</text>
</comment>
<comment type="biotechnology">
    <text evidence="2">Diterpenoid pyrones display various biological activities and subglutinol A shows insecticidal and anti-HIV activities.</text>
</comment>
<comment type="similarity">
    <text evidence="4">Belongs to the FPP/GGPP synthase family.</text>
</comment>
<organism>
    <name type="scientific">Apiospora sacchari</name>
    <name type="common">Arthrinium sacchari</name>
    <dbReference type="NCBI Taxonomy" id="166626"/>
    <lineage>
        <taxon>Eukaryota</taxon>
        <taxon>Fungi</taxon>
        <taxon>Dikarya</taxon>
        <taxon>Ascomycota</taxon>
        <taxon>Pezizomycotina</taxon>
        <taxon>Sordariomycetes</taxon>
        <taxon>Xylariomycetidae</taxon>
        <taxon>Amphisphaeriales</taxon>
        <taxon>Apiosporaceae</taxon>
        <taxon>Apiospora</taxon>
    </lineage>
</organism>
<reference key="1">
    <citation type="journal article" date="2020" name="Nat. Commun.">
        <title>Synthetic biology based construction of biological activity-related library of fungal decalin-containing diterpenoid pyrones.</title>
        <authorList>
            <person name="Tsukada K."/>
            <person name="Shinki S."/>
            <person name="Kaneko A."/>
            <person name="Murakami K."/>
            <person name="Irie K."/>
            <person name="Murai M."/>
            <person name="Miyoshi H."/>
            <person name="Dan S."/>
            <person name="Kawaji K."/>
            <person name="Hayashi H."/>
            <person name="Kodama E.N."/>
            <person name="Hori A."/>
            <person name="Salim E."/>
            <person name="Kuraishi T."/>
            <person name="Hirata N."/>
            <person name="Kanda Y."/>
            <person name="Asai T."/>
        </authorList>
    </citation>
    <scope>NUCLEOTIDE SEQUENCE [GENOMIC DNA]</scope>
    <scope>FUNCTION</scope>
    <scope>CATALYTIC ACTIVITY</scope>
    <scope>PATHWAY</scope>
    <scope>BIOTECHNOLOGY</scope>
</reference>
<accession>P9WEX3</accession>
<keyword id="KW-0460">Magnesium</keyword>
<keyword id="KW-0479">Metal-binding</keyword>
<keyword id="KW-0808">Transferase</keyword>
<evidence type="ECO:0000250" key="1">
    <source>
        <dbReference type="UniProtKB" id="Q12051"/>
    </source>
</evidence>
<evidence type="ECO:0000269" key="2">
    <source>
    </source>
</evidence>
<evidence type="ECO:0000303" key="3">
    <source>
    </source>
</evidence>
<evidence type="ECO:0000305" key="4"/>
<feature type="chain" id="PRO_0000451537" description="Geranylgeranyl pyrophosphate synthase dpasD">
    <location>
        <begin position="1"/>
        <end position="332"/>
    </location>
</feature>
<feature type="binding site" evidence="1">
    <location>
        <position position="55"/>
    </location>
    <ligand>
        <name>isopentenyl diphosphate</name>
        <dbReference type="ChEBI" id="CHEBI:128769"/>
    </ligand>
</feature>
<feature type="binding site" evidence="1">
    <location>
        <position position="58"/>
    </location>
    <ligand>
        <name>isopentenyl diphosphate</name>
        <dbReference type="ChEBI" id="CHEBI:128769"/>
    </ligand>
</feature>
<feature type="binding site" evidence="1">
    <location>
        <position position="87"/>
    </location>
    <ligand>
        <name>isopentenyl diphosphate</name>
        <dbReference type="ChEBI" id="CHEBI:128769"/>
    </ligand>
</feature>
<feature type="binding site" evidence="1">
    <location>
        <position position="94"/>
    </location>
    <ligand>
        <name>Mg(2+)</name>
        <dbReference type="ChEBI" id="CHEBI:18420"/>
        <label>1</label>
    </ligand>
</feature>
<feature type="binding site" evidence="1">
    <location>
        <position position="94"/>
    </location>
    <ligand>
        <name>Mg(2+)</name>
        <dbReference type="ChEBI" id="CHEBI:18420"/>
        <label>2</label>
    </ligand>
</feature>
<feature type="binding site" evidence="1">
    <location>
        <position position="98"/>
    </location>
    <ligand>
        <name>Mg(2+)</name>
        <dbReference type="ChEBI" id="CHEBI:18420"/>
        <label>1</label>
    </ligand>
</feature>
<feature type="binding site" evidence="1">
    <location>
        <position position="98"/>
    </location>
    <ligand>
        <name>Mg(2+)</name>
        <dbReference type="ChEBI" id="CHEBI:18420"/>
        <label>2</label>
    </ligand>
</feature>
<feature type="binding site" evidence="1">
    <location>
        <position position="103"/>
    </location>
    <ligand>
        <name>dimethylallyl diphosphate</name>
        <dbReference type="ChEBI" id="CHEBI:57623"/>
    </ligand>
</feature>
<feature type="binding site" evidence="1">
    <location>
        <position position="104"/>
    </location>
    <ligand>
        <name>isopentenyl diphosphate</name>
        <dbReference type="ChEBI" id="CHEBI:128769"/>
    </ligand>
</feature>
<feature type="binding site" evidence="1">
    <location>
        <position position="181"/>
    </location>
    <ligand>
        <name>dimethylallyl diphosphate</name>
        <dbReference type="ChEBI" id="CHEBI:57623"/>
    </ligand>
</feature>
<feature type="binding site" evidence="1">
    <location>
        <position position="182"/>
    </location>
    <ligand>
        <name>dimethylallyl diphosphate</name>
        <dbReference type="ChEBI" id="CHEBI:57623"/>
    </ligand>
</feature>
<feature type="binding site" evidence="1">
    <location>
        <position position="215"/>
    </location>
    <ligand>
        <name>dimethylallyl diphosphate</name>
        <dbReference type="ChEBI" id="CHEBI:57623"/>
    </ligand>
</feature>
<feature type="binding site" evidence="1">
    <location>
        <position position="218"/>
    </location>
    <ligand>
        <name>Mg(2+)</name>
        <dbReference type="ChEBI" id="CHEBI:18420"/>
        <label>3</label>
    </ligand>
</feature>
<feature type="binding site" evidence="1">
    <location>
        <position position="222"/>
    </location>
    <ligand>
        <name>dimethylallyl diphosphate</name>
        <dbReference type="ChEBI" id="CHEBI:57623"/>
    </ligand>
</feature>
<feature type="binding site" evidence="1">
    <location>
        <position position="232"/>
    </location>
    <ligand>
        <name>dimethylallyl diphosphate</name>
        <dbReference type="ChEBI" id="CHEBI:57623"/>
    </ligand>
</feature>
<feature type="binding site" evidence="1">
    <location>
        <position position="242"/>
    </location>
    <ligand>
        <name>dimethylallyl diphosphate</name>
        <dbReference type="ChEBI" id="CHEBI:57623"/>
    </ligand>
</feature>
<feature type="site" description="Important for determining product chain length" evidence="1">
    <location>
        <position position="126"/>
    </location>
</feature>
<proteinExistence type="evidence at protein level"/>
<protein>
    <recommendedName>
        <fullName evidence="3">Geranylgeranyl pyrophosphate synthase dpasD</fullName>
        <shortName evidence="4">GGPP synthase</shortName>
        <shortName evidence="4">GGPPSase</shortName>
        <ecNumber evidence="2">2.5.1.-</ecNumber>
    </recommendedName>
    <alternativeName>
        <fullName evidence="1">(2E,6E)-farnesyl diphosphate synthase</fullName>
    </alternativeName>
    <alternativeName>
        <fullName evidence="1">Dimethylallyltranstransferase</fullName>
        <ecNumber evidence="1">2.5.1.1</ecNumber>
    </alternativeName>
    <alternativeName>
        <fullName evidence="3">Diterpenoid pyrone biosynthesis cluster protein D</fullName>
    </alternativeName>
    <alternativeName>
        <fullName evidence="1">Farnesyl diphosphate synthase</fullName>
    </alternativeName>
    <alternativeName>
        <fullName evidence="1">Farnesyltranstransferase</fullName>
        <ecNumber evidence="1">2.5.1.29</ecNumber>
    </alternativeName>
    <alternativeName>
        <fullName evidence="1">Geranylgeranyl diphosphate synthase</fullName>
    </alternativeName>
    <alternativeName>
        <fullName evidence="1">Geranyltranstransferase</fullName>
        <ecNumber evidence="1">2.5.1.10</ecNumber>
    </alternativeName>
</protein>